<feature type="chain" id="PRO_0000191620" description="DNA replication factor Cdt1">
    <location>
        <begin position="1"/>
        <end position="557"/>
    </location>
</feature>
<feature type="region of interest" description="Disordered" evidence="3">
    <location>
        <begin position="20"/>
        <end position="113"/>
    </location>
</feature>
<feature type="region of interest" description="Interaction with GMNN" evidence="1">
    <location>
        <begin position="163"/>
        <end position="203"/>
    </location>
</feature>
<feature type="region of interest" description="Disordered" evidence="3">
    <location>
        <begin position="397"/>
        <end position="427"/>
    </location>
</feature>
<feature type="region of interest" description="Interaction with LRWD1" evidence="1">
    <location>
        <begin position="463"/>
        <end position="557"/>
    </location>
</feature>
<feature type="short sequence motif" description="PIP-box K+4 motif" evidence="1">
    <location>
        <begin position="1"/>
        <end position="25"/>
    </location>
</feature>
<feature type="short sequence motif" description="Cyclin-binding motif" evidence="1">
    <location>
        <begin position="65"/>
        <end position="67"/>
    </location>
</feature>
<feature type="compositionally biased region" description="Low complexity" evidence="3">
    <location>
        <begin position="69"/>
        <end position="81"/>
    </location>
</feature>
<feature type="compositionally biased region" description="Pro residues" evidence="3">
    <location>
        <begin position="82"/>
        <end position="106"/>
    </location>
</feature>
<feature type="compositionally biased region" description="Pro residues" evidence="3">
    <location>
        <begin position="407"/>
        <end position="422"/>
    </location>
</feature>
<feature type="modified residue" description="Phosphothreonine; by MAPK8" evidence="1">
    <location>
        <position position="28"/>
    </location>
</feature>
<feature type="modified residue" description="Phosphoserine" evidence="1">
    <location>
        <position position="30"/>
    </location>
</feature>
<feature type="modified residue" description="Phosphoserine; by MAPK8" evidence="1">
    <location>
        <position position="107"/>
    </location>
</feature>
<feature type="modified residue" description="Phosphoserine" evidence="1">
    <location>
        <position position="392"/>
    </location>
</feature>
<feature type="sequence conflict" description="In Ref. 3; BAC33579." evidence="9" ref="3">
    <original>S</original>
    <variation>G</variation>
    <location>
        <position position="4"/>
    </location>
</feature>
<feature type="sequence conflict" description="In Ref. 1; AAL88446." evidence="9" ref="1">
    <original>R</original>
    <variation>H</variation>
    <location>
        <position position="211"/>
    </location>
</feature>
<feature type="sequence conflict" description="In Ref. 1; AAL88446." evidence="9" ref="1">
    <original>T</original>
    <variation>M</variation>
    <location>
        <position position="258"/>
    </location>
</feature>
<feature type="helix" evidence="16">
    <location>
        <begin position="182"/>
        <end position="185"/>
    </location>
</feature>
<feature type="helix" evidence="16">
    <location>
        <begin position="188"/>
        <end position="190"/>
    </location>
</feature>
<feature type="helix" evidence="16">
    <location>
        <begin position="201"/>
        <end position="222"/>
    </location>
</feature>
<feature type="helix" evidence="16">
    <location>
        <begin position="229"/>
        <end position="240"/>
    </location>
</feature>
<feature type="helix" evidence="16">
    <location>
        <begin position="246"/>
        <end position="255"/>
    </location>
</feature>
<feature type="helix" evidence="16">
    <location>
        <begin position="257"/>
        <end position="259"/>
    </location>
</feature>
<feature type="strand" evidence="16">
    <location>
        <begin position="260"/>
        <end position="266"/>
    </location>
</feature>
<feature type="helix" evidence="16">
    <location>
        <begin position="277"/>
        <end position="279"/>
    </location>
</feature>
<feature type="strand" evidence="16">
    <location>
        <begin position="280"/>
        <end position="286"/>
    </location>
</feature>
<feature type="helix" evidence="16">
    <location>
        <begin position="300"/>
        <end position="326"/>
    </location>
</feature>
<feature type="strand" evidence="16">
    <location>
        <begin position="329"/>
        <end position="331"/>
    </location>
</feature>
<feature type="helix" evidence="16">
    <location>
        <begin position="337"/>
        <end position="339"/>
    </location>
</feature>
<feature type="helix" evidence="16">
    <location>
        <begin position="349"/>
        <end position="351"/>
    </location>
</feature>
<feature type="helix" evidence="15">
    <location>
        <begin position="432"/>
        <end position="446"/>
    </location>
</feature>
<feature type="helix" evidence="17">
    <location>
        <begin position="454"/>
        <end position="478"/>
    </location>
</feature>
<feature type="strand" evidence="17">
    <location>
        <begin position="481"/>
        <end position="486"/>
    </location>
</feature>
<feature type="helix" evidence="17">
    <location>
        <begin position="487"/>
        <end position="496"/>
    </location>
</feature>
<feature type="turn" evidence="15">
    <location>
        <begin position="499"/>
        <end position="501"/>
    </location>
</feature>
<feature type="helix" evidence="17">
    <location>
        <begin position="504"/>
        <end position="517"/>
    </location>
</feature>
<feature type="turn" evidence="17">
    <location>
        <begin position="519"/>
        <end position="521"/>
    </location>
</feature>
<feature type="strand" evidence="17">
    <location>
        <begin position="522"/>
        <end position="527"/>
    </location>
</feature>
<feature type="strand" evidence="17">
    <location>
        <begin position="530"/>
        <end position="535"/>
    </location>
</feature>
<feature type="helix" evidence="17">
    <location>
        <begin position="541"/>
        <end position="554"/>
    </location>
</feature>
<dbReference type="EMBL" id="AF477481">
    <property type="protein sequence ID" value="AAL82630.1"/>
    <property type="molecule type" value="mRNA"/>
</dbReference>
<dbReference type="EMBL" id="AF477990">
    <property type="protein sequence ID" value="AAL88446.1"/>
    <property type="molecule type" value="Genomic_DNA"/>
</dbReference>
<dbReference type="EMBL" id="AB086655">
    <property type="protein sequence ID" value="BAC22085.1"/>
    <property type="molecule type" value="mRNA"/>
</dbReference>
<dbReference type="EMBL" id="AK028287">
    <property type="protein sequence ID" value="BAC25859.1"/>
    <property type="molecule type" value="mRNA"/>
</dbReference>
<dbReference type="EMBL" id="AK049163">
    <property type="protein sequence ID" value="BAC33579.1"/>
    <property type="molecule type" value="mRNA"/>
</dbReference>
<dbReference type="EMBL" id="AK083015">
    <property type="protein sequence ID" value="BAC38731.1"/>
    <property type="status" value="ALT_FRAME"/>
    <property type="molecule type" value="mRNA"/>
</dbReference>
<dbReference type="EMBL" id="BC024485">
    <property type="protein sequence ID" value="AAH24485.1"/>
    <property type="molecule type" value="mRNA"/>
</dbReference>
<dbReference type="EMBL" id="BC048076">
    <property type="protein sequence ID" value="AAH48076.1"/>
    <property type="molecule type" value="mRNA"/>
</dbReference>
<dbReference type="CCDS" id="CCDS22741.1"/>
<dbReference type="RefSeq" id="NP_080290.3">
    <property type="nucleotide sequence ID" value="NM_026014.3"/>
</dbReference>
<dbReference type="PDB" id="2KLO">
    <property type="method" value="NMR"/>
    <property type="chains" value="A=420-557"/>
</dbReference>
<dbReference type="PDB" id="2RQQ">
    <property type="method" value="NMR"/>
    <property type="chains" value="A=450-557"/>
</dbReference>
<dbReference type="PDB" id="2ZXX">
    <property type="method" value="X-ray"/>
    <property type="resolution" value="2.80 A"/>
    <property type="chains" value="C/F=172-368"/>
</dbReference>
<dbReference type="PDB" id="3A4C">
    <property type="method" value="X-ray"/>
    <property type="resolution" value="1.89 A"/>
    <property type="chains" value="A=452-557"/>
</dbReference>
<dbReference type="PDBsum" id="2KLO"/>
<dbReference type="PDBsum" id="2RQQ"/>
<dbReference type="PDBsum" id="2ZXX"/>
<dbReference type="PDBsum" id="3A4C"/>
<dbReference type="SMR" id="Q8R4E9"/>
<dbReference type="BioGRID" id="211995">
    <property type="interactions" value="5"/>
</dbReference>
<dbReference type="FunCoup" id="Q8R4E9">
    <property type="interactions" value="1876"/>
</dbReference>
<dbReference type="IntAct" id="Q8R4E9">
    <property type="interactions" value="5"/>
</dbReference>
<dbReference type="STRING" id="10090.ENSMUSP00000006760"/>
<dbReference type="GlyGen" id="Q8R4E9">
    <property type="glycosylation" value="2 sites"/>
</dbReference>
<dbReference type="iPTMnet" id="Q8R4E9"/>
<dbReference type="PhosphoSitePlus" id="Q8R4E9"/>
<dbReference type="jPOST" id="Q8R4E9"/>
<dbReference type="PaxDb" id="10090-ENSMUSP00000006760"/>
<dbReference type="PeptideAtlas" id="Q8R4E9"/>
<dbReference type="ProteomicsDB" id="281303"/>
<dbReference type="Pumba" id="Q8R4E9"/>
<dbReference type="Antibodypedia" id="1905">
    <property type="antibodies" value="223 antibodies from 35 providers"/>
</dbReference>
<dbReference type="DNASU" id="67177"/>
<dbReference type="Ensembl" id="ENSMUST00000006760.3">
    <property type="protein sequence ID" value="ENSMUSP00000006760.3"/>
    <property type="gene ID" value="ENSMUSG00000006585.4"/>
</dbReference>
<dbReference type="GeneID" id="67177"/>
<dbReference type="KEGG" id="mmu:67177"/>
<dbReference type="UCSC" id="uc009ntd.1">
    <property type="organism name" value="mouse"/>
</dbReference>
<dbReference type="AGR" id="MGI:1914427"/>
<dbReference type="CTD" id="81620"/>
<dbReference type="MGI" id="MGI:1914427">
    <property type="gene designation" value="Cdt1"/>
</dbReference>
<dbReference type="VEuPathDB" id="HostDB:ENSMUSG00000006585"/>
<dbReference type="eggNOG" id="KOG4762">
    <property type="taxonomic scope" value="Eukaryota"/>
</dbReference>
<dbReference type="GeneTree" id="ENSGT00390000012337"/>
<dbReference type="HOGENOM" id="CLU_023373_1_0_1"/>
<dbReference type="InParanoid" id="Q8R4E9"/>
<dbReference type="OMA" id="CFRQERN"/>
<dbReference type="OrthoDB" id="341730at2759"/>
<dbReference type="PhylomeDB" id="Q8R4E9"/>
<dbReference type="TreeFam" id="TF101159"/>
<dbReference type="Reactome" id="R-MMU-68867">
    <property type="pathway name" value="Assembly of the pre-replicative complex"/>
</dbReference>
<dbReference type="Reactome" id="R-MMU-68949">
    <property type="pathway name" value="Orc1 removal from chromatin"/>
</dbReference>
<dbReference type="Reactome" id="R-MMU-68962">
    <property type="pathway name" value="Activation of the pre-replicative complex"/>
</dbReference>
<dbReference type="Reactome" id="R-MMU-69052">
    <property type="pathway name" value="Switching of origins to a post-replicative state"/>
</dbReference>
<dbReference type="BioGRID-ORCS" id="67177">
    <property type="hits" value="19 hits in 83 CRISPR screens"/>
</dbReference>
<dbReference type="ChiTaRS" id="Cdt1">
    <property type="organism name" value="mouse"/>
</dbReference>
<dbReference type="EvolutionaryTrace" id="Q8R4E9"/>
<dbReference type="PRO" id="PR:Q8R4E9"/>
<dbReference type="Proteomes" id="UP000000589">
    <property type="component" value="Chromosome 8"/>
</dbReference>
<dbReference type="RNAct" id="Q8R4E9">
    <property type="molecule type" value="protein"/>
</dbReference>
<dbReference type="Bgee" id="ENSMUSG00000006585">
    <property type="expression patterns" value="Expressed in fetal liver hematopoietic progenitor cell and 225 other cell types or tissues"/>
</dbReference>
<dbReference type="GO" id="GO:0000776">
    <property type="term" value="C:kinetochore"/>
    <property type="evidence" value="ECO:0007669"/>
    <property type="project" value="UniProtKB-KW"/>
</dbReference>
<dbReference type="GO" id="GO:0016604">
    <property type="term" value="C:nuclear body"/>
    <property type="evidence" value="ECO:0007669"/>
    <property type="project" value="Ensembl"/>
</dbReference>
<dbReference type="GO" id="GO:0005634">
    <property type="term" value="C:nucleus"/>
    <property type="evidence" value="ECO:0000314"/>
    <property type="project" value="UniProtKB"/>
</dbReference>
<dbReference type="GO" id="GO:0003682">
    <property type="term" value="F:chromatin binding"/>
    <property type="evidence" value="ECO:0007669"/>
    <property type="project" value="Ensembl"/>
</dbReference>
<dbReference type="GO" id="GO:0003677">
    <property type="term" value="F:DNA binding"/>
    <property type="evidence" value="ECO:0000314"/>
    <property type="project" value="UniProtKB"/>
</dbReference>
<dbReference type="GO" id="GO:0051315">
    <property type="term" value="P:attachment of mitotic spindle microtubules to kinetochore"/>
    <property type="evidence" value="ECO:0000250"/>
    <property type="project" value="UniProtKB"/>
</dbReference>
<dbReference type="GO" id="GO:0000076">
    <property type="term" value="P:DNA replication checkpoint signaling"/>
    <property type="evidence" value="ECO:0000314"/>
    <property type="project" value="UniProtKB"/>
</dbReference>
<dbReference type="GO" id="GO:0071163">
    <property type="term" value="P:DNA replication preinitiation complex assembly"/>
    <property type="evidence" value="ECO:0007669"/>
    <property type="project" value="Ensembl"/>
</dbReference>
<dbReference type="GO" id="GO:2000104">
    <property type="term" value="P:negative regulation of DNA-templated DNA replication"/>
    <property type="evidence" value="ECO:0007669"/>
    <property type="project" value="Ensembl"/>
</dbReference>
<dbReference type="GO" id="GO:2000105">
    <property type="term" value="P:positive regulation of DNA-templated DNA replication"/>
    <property type="evidence" value="ECO:0007669"/>
    <property type="project" value="Ensembl"/>
</dbReference>
<dbReference type="GO" id="GO:0030174">
    <property type="term" value="P:regulation of DNA-templated DNA replication initiation"/>
    <property type="evidence" value="ECO:0000314"/>
    <property type="project" value="UniProtKB"/>
</dbReference>
<dbReference type="GO" id="GO:0033262">
    <property type="term" value="P:regulation of nuclear cell cycle DNA replication"/>
    <property type="evidence" value="ECO:0000314"/>
    <property type="project" value="MGI"/>
</dbReference>
<dbReference type="GO" id="GO:0072708">
    <property type="term" value="P:response to sorbitol"/>
    <property type="evidence" value="ECO:0007669"/>
    <property type="project" value="Ensembl"/>
</dbReference>
<dbReference type="CDD" id="cd08767">
    <property type="entry name" value="Cdt1_c"/>
    <property type="match status" value="1"/>
</dbReference>
<dbReference type="CDD" id="cd08674">
    <property type="entry name" value="Cdt1_m"/>
    <property type="match status" value="1"/>
</dbReference>
<dbReference type="FunFam" id="1.10.10.1420:FF:000001">
    <property type="entry name" value="Chromatin licensing and DNA replication factor 1"/>
    <property type="match status" value="1"/>
</dbReference>
<dbReference type="Gene3D" id="1.10.10.1420">
    <property type="entry name" value="DNA replication factor Cdt1, C-terminal WH domain"/>
    <property type="match status" value="1"/>
</dbReference>
<dbReference type="IDEAL" id="IID50342"/>
<dbReference type="InterPro" id="IPR045173">
    <property type="entry name" value="Cdt1"/>
</dbReference>
<dbReference type="InterPro" id="IPR032054">
    <property type="entry name" value="Cdt1_C"/>
</dbReference>
<dbReference type="InterPro" id="IPR038090">
    <property type="entry name" value="Cdt1_C_WH_dom_sf"/>
</dbReference>
<dbReference type="InterPro" id="IPR014939">
    <property type="entry name" value="CDT1_Gemini-bd-like"/>
</dbReference>
<dbReference type="InterPro" id="IPR036390">
    <property type="entry name" value="WH_DNA-bd_sf"/>
</dbReference>
<dbReference type="PANTHER" id="PTHR28637">
    <property type="entry name" value="DNA REPLICATION FACTOR CDT1"/>
    <property type="match status" value="1"/>
</dbReference>
<dbReference type="PANTHER" id="PTHR28637:SF1">
    <property type="entry name" value="DNA REPLICATION FACTOR CDT1"/>
    <property type="match status" value="1"/>
</dbReference>
<dbReference type="Pfam" id="PF08839">
    <property type="entry name" value="CDT1"/>
    <property type="match status" value="1"/>
</dbReference>
<dbReference type="Pfam" id="PF16679">
    <property type="entry name" value="CDT1_C"/>
    <property type="match status" value="1"/>
</dbReference>
<dbReference type="SMART" id="SM01075">
    <property type="entry name" value="CDT1"/>
    <property type="match status" value="1"/>
</dbReference>
<dbReference type="SUPFAM" id="SSF46785">
    <property type="entry name" value="Winged helix' DNA-binding domain"/>
    <property type="match status" value="1"/>
</dbReference>
<protein>
    <recommendedName>
        <fullName>DNA replication factor Cdt1</fullName>
    </recommendedName>
    <alternativeName>
        <fullName>Double parked homolog</fullName>
        <shortName>DUP</shortName>
    </alternativeName>
    <alternativeName>
        <fullName>Retroviral insertion site 2 protein</fullName>
    </alternativeName>
</protein>
<name>CDT1_MOUSE</name>
<proteinExistence type="evidence at protein level"/>
<sequence length="557" mass="61510">MAQSRVTDFYACRRPGLTTPRAKSICLTPSPGGLVAPAFTRSSSRKRARPPAEPGSDQPAPLARRRLRLPGLDSCPSSLPEPSSPAEPSPPADPSPPADPGSPVCPSPVKRTKSTTVYVGQQPGKIPSEDSVSELQSCLRRARKLGAQARALRARVQENAVEPSTPDAKVPTEQPCVEKAPAYQRFHALAQPGLPGLVLPYKYQVLVEMFRSMDTIVSMLHNRSETVTFAKVKQGVQEMMRKRFEERNVGQIKTVYPTSYRFRQECNVPTFKDSIKRSDYQLTIEPLLGQEAGGATQLTATCLLQRRQVFRQNLVERVKEQHKVFLASLNPPMAVPDDQLTRWHPRFNVDEVPDIEPAELPQPPVTEKLTTAQEVLARARSLMTPKMEKALSNLALRSAEPGSPGTSTPPLPATPPATPPAASPSALKGVSQALLERIRAKEVQKQLARMTRCPEQELRLQRLERLPELARVLRNVFVSERKPALTMEVVCARMVDSCQTALSPGEMEKHLVLLAELLPDWLSLHRIRTDTYVKLDKAVDLAGLTARLAHHVHAEGL</sequence>
<keyword id="KW-0002">3D-structure</keyword>
<keyword id="KW-0131">Cell cycle</keyword>
<keyword id="KW-0137">Centromere</keyword>
<keyword id="KW-0158">Chromosome</keyword>
<keyword id="KW-0235">DNA replication</keyword>
<keyword id="KW-0238">DNA-binding</keyword>
<keyword id="KW-0995">Kinetochore</keyword>
<keyword id="KW-0539">Nucleus</keyword>
<keyword id="KW-0597">Phosphoprotein</keyword>
<keyword id="KW-0656">Proto-oncogene</keyword>
<keyword id="KW-1185">Reference proteome</keyword>
<keyword id="KW-0832">Ubl conjugation</keyword>
<accession>Q8R4E9</accession>
<accession>Q8BUQ1</accession>
<accession>Q8BX29</accession>
<accession>Q8R3V0</accession>
<accession>Q8R4E8</accession>
<evidence type="ECO:0000250" key="1">
    <source>
        <dbReference type="UniProtKB" id="Q9H211"/>
    </source>
</evidence>
<evidence type="ECO:0000250" key="2">
    <source>
        <dbReference type="UniProtKB" id="Q9I9A7"/>
    </source>
</evidence>
<evidence type="ECO:0000256" key="3">
    <source>
        <dbReference type="SAM" id="MobiDB-lite"/>
    </source>
</evidence>
<evidence type="ECO:0000269" key="4">
    <source>
    </source>
</evidence>
<evidence type="ECO:0000269" key="5">
    <source>
    </source>
</evidence>
<evidence type="ECO:0000269" key="6">
    <source>
    </source>
</evidence>
<evidence type="ECO:0000269" key="7">
    <source>
    </source>
</evidence>
<evidence type="ECO:0000303" key="8">
    <source>
    </source>
</evidence>
<evidence type="ECO:0000305" key="9"/>
<evidence type="ECO:0000312" key="10">
    <source>
        <dbReference type="EMBL" id="AAH24485.1"/>
    </source>
</evidence>
<evidence type="ECO:0000312" key="11">
    <source>
        <dbReference type="EMBL" id="AAH48076.1"/>
    </source>
</evidence>
<evidence type="ECO:0000312" key="12">
    <source>
        <dbReference type="EMBL" id="AAL82630.1"/>
    </source>
</evidence>
<evidence type="ECO:0000312" key="13">
    <source>
        <dbReference type="EMBL" id="BAC22085.1"/>
    </source>
</evidence>
<evidence type="ECO:0000312" key="14">
    <source>
        <dbReference type="MGI" id="MGI:1914427"/>
    </source>
</evidence>
<evidence type="ECO:0007829" key="15">
    <source>
        <dbReference type="PDB" id="2KLO"/>
    </source>
</evidence>
<evidence type="ECO:0007829" key="16">
    <source>
        <dbReference type="PDB" id="2ZXX"/>
    </source>
</evidence>
<evidence type="ECO:0007829" key="17">
    <source>
        <dbReference type="PDB" id="3A4C"/>
    </source>
</evidence>
<gene>
    <name evidence="8" type="primary">Cdt1</name>
    <name evidence="14" type="synonym">Ris2</name>
</gene>
<organism>
    <name type="scientific">Mus musculus</name>
    <name type="common">Mouse</name>
    <dbReference type="NCBI Taxonomy" id="10090"/>
    <lineage>
        <taxon>Eukaryota</taxon>
        <taxon>Metazoa</taxon>
        <taxon>Chordata</taxon>
        <taxon>Craniata</taxon>
        <taxon>Vertebrata</taxon>
        <taxon>Euteleostomi</taxon>
        <taxon>Mammalia</taxon>
        <taxon>Eutheria</taxon>
        <taxon>Euarchontoglires</taxon>
        <taxon>Glires</taxon>
        <taxon>Rodentia</taxon>
        <taxon>Myomorpha</taxon>
        <taxon>Muroidea</taxon>
        <taxon>Muridae</taxon>
        <taxon>Murinae</taxon>
        <taxon>Mus</taxon>
        <taxon>Mus</taxon>
    </lineage>
</organism>
<comment type="function">
    <text evidence="1 4 5 6">Required for both DNA replication and mitosis. DNA replication licensing factor, required for pre-replication complex assembly. Cooperates with CDC6 and the origin recognition complex (ORC) during G1 phase of the cell cycle to promote the loading of the mini-chromosome maintenance (MCM) complex onto DNA to generate pre-replication complexes (pre-RC). Required also for mitosis by promoting stable kinetochore-microtubule attachments (By similarity). Potential oncogene (PubMed:11850834).</text>
</comment>
<comment type="subunit">
    <text evidence="1 5 7">Interacts with GMNN; the interaction inhibits the binding of the MCM complex to origins of replication (PubMed:12192004, PubMed:15811859). Interacts with MCM6 (PubMed:15811859). Interacts with CDC6; are mutually dependent on one another for loading MCM complexes onto chromatin (By similarity). Interacts with PCNA (By similarity). Interacts with LRWD1 during G1 phase and during mitosis (By similarity). Interacts with NDC80 subunit of the NDC80 complex; leading to kinetochore localization (By similarity). Interacts with KAT7 (By similarity). Interacts with ubiquitin-binding protein FAF1; the interaction is likely to promote CDT1 degradation (By similarity).</text>
</comment>
<comment type="interaction">
    <interactant intactId="EBI-457043">
        <id>Q8R4E9</id>
    </interactant>
    <interactant intactId="EBI-445922">
        <id>O88513</id>
        <label>Gmnn</label>
    </interactant>
    <organismsDiffer>false</organismsDiffer>
    <experiments>3</experiments>
</comment>
<comment type="interaction">
    <interactant intactId="EBI-457043">
        <id>Q8R4E9</id>
    </interactant>
    <interactant intactId="EBI-457132">
        <id>P97311</id>
        <label>Mcm6</label>
    </interactant>
    <organismsDiffer>false</organismsDiffer>
    <experiments>2</experiments>
</comment>
<comment type="subcellular location">
    <subcellularLocation>
        <location evidence="6">Nucleus</location>
    </subcellularLocation>
    <subcellularLocation>
        <location evidence="1">Chromosome</location>
        <location evidence="1">Centromere</location>
        <location evidence="1">Kinetochore</location>
    </subcellularLocation>
    <text evidence="1">Transiently localizes to kinetochores during prometaphase and metaphase.</text>
</comment>
<comment type="developmental stage">
    <text evidence="4">Present during G1 and early S phase of the cell cycle. Degraded during the late S, G2, and M phases.</text>
</comment>
<comment type="domain">
    <text evidence="2">The PIP-box K+4 motif mediates both the interaction with PCNA and the recruitment of the DCX(DTL) complex: while the PIP-box interacts with PCNA, the presence of the K+4 submotif, recruits the DCX(DTL) complex, leading to its ubiquitination.</text>
</comment>
<comment type="PTM">
    <text evidence="1">Two independent E3 ubiquitin ligase complexes, SCF(SKP2) and the DCX(DTL) complex, mediated CDT1 degradation in S phase. Ubiquitinated by the DCX(DTL) complex, in response to DNA damage, leading to its degradation. Ubiquitination by the DCX(DTL) complex is necessary to ensure proper cell cycle regulation and is PCNA-dependent: interacts with PCNA via its PIP-box, while the presence of the containing the 'K+4' motif in the PIP box, recruit the DCX(DTL) complex, leading to its degradation. Phosphorylation at Thr-28 by CDK2 targets CDT1 for ubiquitynation by SCF(SKP2) E3 ubiquitin ligase and subsequent degradation. The interaction with GMNN protects it against ubiquitination. Deubiquitinated by USP37. Ubiquitinated and degraded by the SCF(FBXO31) complex during the G2 phase to prevent re-replication.</text>
</comment>
<comment type="PTM">
    <text evidence="1 6">Phosphorylation by cyclin A-dependent kinases at Thr-28 targets CDT1 for ubiquitynation by SCF(SKP2) E3 ubiquitin ligase and subsequent degradation. Phosphorylated at Thr-28 by MAPK8/JNK1, which blocks replication licensing in response to stress. Binding to GMNN is not affected by phosphorylation (PubMed:14993212).</text>
</comment>
<comment type="similarity">
    <text evidence="9">Belongs to the Cdt1 family.</text>
</comment>
<comment type="caution">
    <text evidence="5 9">Was originally thought to have DNA binding activity (PubMed:12192004). However, more recent studies show that CDT1 binds DNA indirectly via ORC.</text>
</comment>
<comment type="sequence caution" evidence="9">
    <conflict type="frameshift">
        <sequence resource="EMBL-CDS" id="BAC38731"/>
    </conflict>
</comment>
<reference evidence="9 12" key="1">
    <citation type="journal article" date="2002" name="Oncogene">
        <title>Oncogenic potential of the DNA replication licensing protein CDT1.</title>
        <authorList>
            <person name="Arentson E."/>
            <person name="Faloon P."/>
            <person name="Seo J."/>
            <person name="Moon E."/>
            <person name="Studts J.M."/>
            <person name="Fremont D.H."/>
            <person name="Choi K."/>
        </authorList>
    </citation>
    <scope>NUCLEOTIDE SEQUENCE [GENOMIC DNA / MRNA]</scope>
    <scope>FUNCTION</scope>
    <scope>DEVELOPMENTAL STAGE</scope>
    <source>
        <strain evidence="12">129/Sv</strain>
    </source>
</reference>
<reference evidence="9 13" key="2">
    <citation type="journal article" date="2002" name="J. Biol. Chem.">
        <title>Mouse geminin inhibits not only Cdt1-MCM6 interactions but also a novel intrinsic Cdt1 DNA binding activity.</title>
        <authorList>
            <person name="Yanagi K."/>
            <person name="Mizuno T."/>
            <person name="You Z."/>
            <person name="Hanaoka F."/>
        </authorList>
    </citation>
    <scope>NUCLEOTIDE SEQUENCE [MRNA]</scope>
    <scope>FUNCTION</scope>
    <scope>INTERACTION WITH GMNN; MCM6 AND ORC2</scope>
</reference>
<reference key="3">
    <citation type="journal article" date="2005" name="Science">
        <title>The transcriptional landscape of the mammalian genome.</title>
        <authorList>
            <person name="Carninci P."/>
            <person name="Kasukawa T."/>
            <person name="Katayama S."/>
            <person name="Gough J."/>
            <person name="Frith M.C."/>
            <person name="Maeda N."/>
            <person name="Oyama R."/>
            <person name="Ravasi T."/>
            <person name="Lenhard B."/>
            <person name="Wells C."/>
            <person name="Kodzius R."/>
            <person name="Shimokawa K."/>
            <person name="Bajic V.B."/>
            <person name="Brenner S.E."/>
            <person name="Batalov S."/>
            <person name="Forrest A.R."/>
            <person name="Zavolan M."/>
            <person name="Davis M.J."/>
            <person name="Wilming L.G."/>
            <person name="Aidinis V."/>
            <person name="Allen J.E."/>
            <person name="Ambesi-Impiombato A."/>
            <person name="Apweiler R."/>
            <person name="Aturaliya R.N."/>
            <person name="Bailey T.L."/>
            <person name="Bansal M."/>
            <person name="Baxter L."/>
            <person name="Beisel K.W."/>
            <person name="Bersano T."/>
            <person name="Bono H."/>
            <person name="Chalk A.M."/>
            <person name="Chiu K.P."/>
            <person name="Choudhary V."/>
            <person name="Christoffels A."/>
            <person name="Clutterbuck D.R."/>
            <person name="Crowe M.L."/>
            <person name="Dalla E."/>
            <person name="Dalrymple B.P."/>
            <person name="de Bono B."/>
            <person name="Della Gatta G."/>
            <person name="di Bernardo D."/>
            <person name="Down T."/>
            <person name="Engstrom P."/>
            <person name="Fagiolini M."/>
            <person name="Faulkner G."/>
            <person name="Fletcher C.F."/>
            <person name="Fukushima T."/>
            <person name="Furuno M."/>
            <person name="Futaki S."/>
            <person name="Gariboldi M."/>
            <person name="Georgii-Hemming P."/>
            <person name="Gingeras T.R."/>
            <person name="Gojobori T."/>
            <person name="Green R.E."/>
            <person name="Gustincich S."/>
            <person name="Harbers M."/>
            <person name="Hayashi Y."/>
            <person name="Hensch T.K."/>
            <person name="Hirokawa N."/>
            <person name="Hill D."/>
            <person name="Huminiecki L."/>
            <person name="Iacono M."/>
            <person name="Ikeo K."/>
            <person name="Iwama A."/>
            <person name="Ishikawa T."/>
            <person name="Jakt M."/>
            <person name="Kanapin A."/>
            <person name="Katoh M."/>
            <person name="Kawasawa Y."/>
            <person name="Kelso J."/>
            <person name="Kitamura H."/>
            <person name="Kitano H."/>
            <person name="Kollias G."/>
            <person name="Krishnan S.P."/>
            <person name="Kruger A."/>
            <person name="Kummerfeld S.K."/>
            <person name="Kurochkin I.V."/>
            <person name="Lareau L.F."/>
            <person name="Lazarevic D."/>
            <person name="Lipovich L."/>
            <person name="Liu J."/>
            <person name="Liuni S."/>
            <person name="McWilliam S."/>
            <person name="Madan Babu M."/>
            <person name="Madera M."/>
            <person name="Marchionni L."/>
            <person name="Matsuda H."/>
            <person name="Matsuzawa S."/>
            <person name="Miki H."/>
            <person name="Mignone F."/>
            <person name="Miyake S."/>
            <person name="Morris K."/>
            <person name="Mottagui-Tabar S."/>
            <person name="Mulder N."/>
            <person name="Nakano N."/>
            <person name="Nakauchi H."/>
            <person name="Ng P."/>
            <person name="Nilsson R."/>
            <person name="Nishiguchi S."/>
            <person name="Nishikawa S."/>
            <person name="Nori F."/>
            <person name="Ohara O."/>
            <person name="Okazaki Y."/>
            <person name="Orlando V."/>
            <person name="Pang K.C."/>
            <person name="Pavan W.J."/>
            <person name="Pavesi G."/>
            <person name="Pesole G."/>
            <person name="Petrovsky N."/>
            <person name="Piazza S."/>
            <person name="Reed J."/>
            <person name="Reid J.F."/>
            <person name="Ring B.Z."/>
            <person name="Ringwald M."/>
            <person name="Rost B."/>
            <person name="Ruan Y."/>
            <person name="Salzberg S.L."/>
            <person name="Sandelin A."/>
            <person name="Schneider C."/>
            <person name="Schoenbach C."/>
            <person name="Sekiguchi K."/>
            <person name="Semple C.A."/>
            <person name="Seno S."/>
            <person name="Sessa L."/>
            <person name="Sheng Y."/>
            <person name="Shibata Y."/>
            <person name="Shimada H."/>
            <person name="Shimada K."/>
            <person name="Silva D."/>
            <person name="Sinclair B."/>
            <person name="Sperling S."/>
            <person name="Stupka E."/>
            <person name="Sugiura K."/>
            <person name="Sultana R."/>
            <person name="Takenaka Y."/>
            <person name="Taki K."/>
            <person name="Tammoja K."/>
            <person name="Tan S.L."/>
            <person name="Tang S."/>
            <person name="Taylor M.S."/>
            <person name="Tegner J."/>
            <person name="Teichmann S.A."/>
            <person name="Ueda H.R."/>
            <person name="van Nimwegen E."/>
            <person name="Verardo R."/>
            <person name="Wei C.L."/>
            <person name="Yagi K."/>
            <person name="Yamanishi H."/>
            <person name="Zabarovsky E."/>
            <person name="Zhu S."/>
            <person name="Zimmer A."/>
            <person name="Hide W."/>
            <person name="Bult C."/>
            <person name="Grimmond S.M."/>
            <person name="Teasdale R.D."/>
            <person name="Liu E.T."/>
            <person name="Brusic V."/>
            <person name="Quackenbush J."/>
            <person name="Wahlestedt C."/>
            <person name="Mattick J.S."/>
            <person name="Hume D.A."/>
            <person name="Kai C."/>
            <person name="Sasaki D."/>
            <person name="Tomaru Y."/>
            <person name="Fukuda S."/>
            <person name="Kanamori-Katayama M."/>
            <person name="Suzuki M."/>
            <person name="Aoki J."/>
            <person name="Arakawa T."/>
            <person name="Iida J."/>
            <person name="Imamura K."/>
            <person name="Itoh M."/>
            <person name="Kato T."/>
            <person name="Kawaji H."/>
            <person name="Kawagashira N."/>
            <person name="Kawashima T."/>
            <person name="Kojima M."/>
            <person name="Kondo S."/>
            <person name="Konno H."/>
            <person name="Nakano K."/>
            <person name="Ninomiya N."/>
            <person name="Nishio T."/>
            <person name="Okada M."/>
            <person name="Plessy C."/>
            <person name="Shibata K."/>
            <person name="Shiraki T."/>
            <person name="Suzuki S."/>
            <person name="Tagami M."/>
            <person name="Waki K."/>
            <person name="Watahiki A."/>
            <person name="Okamura-Oho Y."/>
            <person name="Suzuki H."/>
            <person name="Kawai J."/>
            <person name="Hayashizaki Y."/>
        </authorList>
    </citation>
    <scope>NUCLEOTIDE SEQUENCE [LARGE SCALE MRNA]</scope>
    <source>
        <strain>C57BL/6J</strain>
        <tissue>Embryonic stem cell</tissue>
        <tissue>Fetal head</tissue>
    </source>
</reference>
<reference evidence="11" key="4">
    <citation type="journal article" date="2004" name="Genome Res.">
        <title>The status, quality, and expansion of the NIH full-length cDNA project: the Mammalian Gene Collection (MGC).</title>
        <authorList>
            <consortium name="The MGC Project Team"/>
        </authorList>
    </citation>
    <scope>NUCLEOTIDE SEQUENCE [LARGE SCALE MRNA]</scope>
    <source>
        <tissue evidence="10">Mammary gland</tissue>
        <tissue evidence="11">Olfactory epithelium</tissue>
    </source>
</reference>
<reference evidence="9" key="5">
    <citation type="journal article" date="2004" name="J. Biol. Chem.">
        <title>Cdt1 phosphorylation by cyclin A-dependent kinases negatively regulates its function without affecting geminin binding.</title>
        <authorList>
            <person name="Sugimoto N."/>
            <person name="Tatsumi Y."/>
            <person name="Tsurumi T."/>
            <person name="Matsukage A."/>
            <person name="Kiyono T."/>
            <person name="Nishitani H."/>
            <person name="Fujita M."/>
        </authorList>
    </citation>
    <scope>FUNCTION</scope>
    <scope>PHOSPHORYLATION</scope>
    <scope>SUBCELLULAR LOCATION</scope>
</reference>
<reference key="6">
    <citation type="journal article" date="2005" name="J. Biol. Chem.">
        <title>Caenorhabditis elegans geminin homologue participates in cell cycle regulation and germ line development.</title>
        <authorList>
            <person name="Yanagi K."/>
            <person name="Mizuno T."/>
            <person name="Tsuyama T."/>
            <person name="Tada S."/>
            <person name="Iida Y."/>
            <person name="Sugimoto A."/>
            <person name="Eki T."/>
            <person name="Enomoto T."/>
            <person name="Hanaoka F."/>
        </authorList>
    </citation>
    <scope>INTERACTION WITH GMNN AND MCM6</scope>
</reference>
<reference evidence="9" key="7">
    <citation type="journal article" date="2004" name="Nature">
        <title>Structural basis for inhibition of the replication licensing factor Cdt1 by geminin.</title>
        <authorList>
            <person name="Lee C."/>
            <person name="Hong B."/>
            <person name="Choi J.M."/>
            <person name="Kim Y."/>
            <person name="Watanabe S."/>
            <person name="Ishimi Y."/>
            <person name="Enomoto T."/>
            <person name="Tada S."/>
            <person name="Kim Y."/>
            <person name="Cho Y."/>
        </authorList>
    </citation>
    <scope>X-RAY CRYSTALLOGRAPHY (2.8 ANGSTROMS) OF 172-368</scope>
    <scope>INTERACTION WITH GMNN</scope>
</reference>